<feature type="chain" id="PRO_0000344896" description="Ribonuclease Y">
    <location>
        <begin position="1"/>
        <end position="540"/>
    </location>
</feature>
<feature type="transmembrane region" description="Helical" evidence="1">
    <location>
        <begin position="4"/>
        <end position="24"/>
    </location>
</feature>
<feature type="domain" description="KH" evidence="1">
    <location>
        <begin position="230"/>
        <end position="293"/>
    </location>
</feature>
<feature type="domain" description="HD" evidence="2">
    <location>
        <begin position="356"/>
        <end position="449"/>
    </location>
</feature>
<proteinExistence type="inferred from homology"/>
<dbReference type="EC" id="3.1.-.-" evidence="1"/>
<dbReference type="EMBL" id="AE017198">
    <property type="protein sequence ID" value="AAS08661.1"/>
    <property type="molecule type" value="Genomic_DNA"/>
</dbReference>
<dbReference type="RefSeq" id="WP_004897729.1">
    <property type="nucleotide sequence ID" value="NC_005362.1"/>
</dbReference>
<dbReference type="SMR" id="Q74KB1"/>
<dbReference type="GeneID" id="83570765"/>
<dbReference type="KEGG" id="ljo:LJ_0840"/>
<dbReference type="eggNOG" id="COG1418">
    <property type="taxonomic scope" value="Bacteria"/>
</dbReference>
<dbReference type="HOGENOM" id="CLU_028328_1_0_9"/>
<dbReference type="Proteomes" id="UP000000581">
    <property type="component" value="Chromosome"/>
</dbReference>
<dbReference type="GO" id="GO:0005886">
    <property type="term" value="C:plasma membrane"/>
    <property type="evidence" value="ECO:0007669"/>
    <property type="project" value="UniProtKB-SubCell"/>
</dbReference>
<dbReference type="GO" id="GO:0003723">
    <property type="term" value="F:RNA binding"/>
    <property type="evidence" value="ECO:0007669"/>
    <property type="project" value="UniProtKB-UniRule"/>
</dbReference>
<dbReference type="GO" id="GO:0004521">
    <property type="term" value="F:RNA endonuclease activity"/>
    <property type="evidence" value="ECO:0007669"/>
    <property type="project" value="UniProtKB-UniRule"/>
</dbReference>
<dbReference type="GO" id="GO:0006402">
    <property type="term" value="P:mRNA catabolic process"/>
    <property type="evidence" value="ECO:0007669"/>
    <property type="project" value="UniProtKB-UniRule"/>
</dbReference>
<dbReference type="CDD" id="cd00077">
    <property type="entry name" value="HDc"/>
    <property type="match status" value="1"/>
</dbReference>
<dbReference type="CDD" id="cd22431">
    <property type="entry name" value="KH-I_RNaseY"/>
    <property type="match status" value="1"/>
</dbReference>
<dbReference type="Gene3D" id="1.10.3210.10">
    <property type="entry name" value="Hypothetical protein af1432"/>
    <property type="match status" value="1"/>
</dbReference>
<dbReference type="Gene3D" id="3.30.1370.10">
    <property type="entry name" value="K Homology domain, type 1"/>
    <property type="match status" value="1"/>
</dbReference>
<dbReference type="HAMAP" id="MF_00335">
    <property type="entry name" value="RNase_Y"/>
    <property type="match status" value="1"/>
</dbReference>
<dbReference type="InterPro" id="IPR003607">
    <property type="entry name" value="HD/PDEase_dom"/>
</dbReference>
<dbReference type="InterPro" id="IPR006674">
    <property type="entry name" value="HD_domain"/>
</dbReference>
<dbReference type="InterPro" id="IPR006675">
    <property type="entry name" value="HDIG_dom"/>
</dbReference>
<dbReference type="InterPro" id="IPR004087">
    <property type="entry name" value="KH_dom"/>
</dbReference>
<dbReference type="InterPro" id="IPR004088">
    <property type="entry name" value="KH_dom_type_1"/>
</dbReference>
<dbReference type="InterPro" id="IPR036612">
    <property type="entry name" value="KH_dom_type_1_sf"/>
</dbReference>
<dbReference type="InterPro" id="IPR017705">
    <property type="entry name" value="Ribonuclease_Y"/>
</dbReference>
<dbReference type="InterPro" id="IPR022711">
    <property type="entry name" value="RNase_Y_N"/>
</dbReference>
<dbReference type="NCBIfam" id="TIGR00277">
    <property type="entry name" value="HDIG"/>
    <property type="match status" value="1"/>
</dbReference>
<dbReference type="NCBIfam" id="TIGR03319">
    <property type="entry name" value="RNase_Y"/>
    <property type="match status" value="1"/>
</dbReference>
<dbReference type="PANTHER" id="PTHR12826">
    <property type="entry name" value="RIBONUCLEASE Y"/>
    <property type="match status" value="1"/>
</dbReference>
<dbReference type="PANTHER" id="PTHR12826:SF15">
    <property type="entry name" value="RIBONUCLEASE Y"/>
    <property type="match status" value="1"/>
</dbReference>
<dbReference type="Pfam" id="PF01966">
    <property type="entry name" value="HD"/>
    <property type="match status" value="1"/>
</dbReference>
<dbReference type="Pfam" id="PF00013">
    <property type="entry name" value="KH_1"/>
    <property type="match status" value="1"/>
</dbReference>
<dbReference type="Pfam" id="PF12072">
    <property type="entry name" value="RNase_Y_N"/>
    <property type="match status" value="1"/>
</dbReference>
<dbReference type="SMART" id="SM00471">
    <property type="entry name" value="HDc"/>
    <property type="match status" value="1"/>
</dbReference>
<dbReference type="SMART" id="SM00322">
    <property type="entry name" value="KH"/>
    <property type="match status" value="1"/>
</dbReference>
<dbReference type="SUPFAM" id="SSF54791">
    <property type="entry name" value="Eukaryotic type KH-domain (KH-domain type I)"/>
    <property type="match status" value="1"/>
</dbReference>
<dbReference type="SUPFAM" id="SSF109604">
    <property type="entry name" value="HD-domain/PDEase-like"/>
    <property type="match status" value="1"/>
</dbReference>
<dbReference type="PROSITE" id="PS51831">
    <property type="entry name" value="HD"/>
    <property type="match status" value="1"/>
</dbReference>
<dbReference type="PROSITE" id="PS50084">
    <property type="entry name" value="KH_TYPE_1"/>
    <property type="match status" value="1"/>
</dbReference>
<protein>
    <recommendedName>
        <fullName evidence="1">Ribonuclease Y</fullName>
        <shortName evidence="1">RNase Y</shortName>
        <ecNumber evidence="1">3.1.-.-</ecNumber>
    </recommendedName>
</protein>
<organism>
    <name type="scientific">Lactobacillus johnsonii (strain CNCM I-12250 / La1 / NCC 533)</name>
    <dbReference type="NCBI Taxonomy" id="257314"/>
    <lineage>
        <taxon>Bacteria</taxon>
        <taxon>Bacillati</taxon>
        <taxon>Bacillota</taxon>
        <taxon>Bacilli</taxon>
        <taxon>Lactobacillales</taxon>
        <taxon>Lactobacillaceae</taxon>
        <taxon>Lactobacillus</taxon>
    </lineage>
</organism>
<name>RNY_LACJO</name>
<comment type="function">
    <text evidence="1">Endoribonuclease that initiates mRNA decay.</text>
</comment>
<comment type="subcellular location">
    <subcellularLocation>
        <location evidence="1">Cell membrane</location>
        <topology evidence="1">Single-pass membrane protein</topology>
    </subcellularLocation>
</comment>
<comment type="similarity">
    <text evidence="1">Belongs to the RNase Y family.</text>
</comment>
<accession>Q74KB1</accession>
<gene>
    <name evidence="1" type="primary">rny</name>
    <name type="ordered locus">LJ_0840</name>
</gene>
<keyword id="KW-1003">Cell membrane</keyword>
<keyword id="KW-0255">Endonuclease</keyword>
<keyword id="KW-0378">Hydrolase</keyword>
<keyword id="KW-0472">Membrane</keyword>
<keyword id="KW-0540">Nuclease</keyword>
<keyword id="KW-0694">RNA-binding</keyword>
<keyword id="KW-0812">Transmembrane</keyword>
<keyword id="KW-1133">Transmembrane helix</keyword>
<sequence>MVNTILVPVAVAIVSVLVGGCAGYSIRKNKWETQAQNAAHDAKHILADAESKAKAVEADLASQKEAMKKAAADAKKEKILEAQEEIHHYRERVDNELNERRQEVSRQENRLLQREDAIDHKDSLLDQKDSQLTQKENQIKKLQAQVLEKENRADQLVTEREKKLYEVAELNQEDAKKIVLDKLSDQLVKERAEMIEESNQLAKAKADHFARKVIVDAIQSSAADTVSEKTVSVVNLPSDDMKGRIIGREGRNIRSFEALTGVDVIIDDTPDVVVLSGFDPIRREIAKRALERLIKDGRIHPARIEEMVDRARKEVNDDIYEAGESALMELGIHKMHPELVKILGRLKYRTSYGQNVLSHSIEVGKLTGVMAAELGLDEKIAVRAGLLHDIGKSIDHEIEGSHVEIGVELARKYHEPDLVVNAIAAHHDDVPKLSFIAELVVAADTISSARPGARSESLENYIRRLEQLETIAKGHIGVKQAYAIQAGREIRVMVEPDKISDARTTILAHDIRNQIEQDMEYPGNIKVTVIREKRAVAIAK</sequence>
<evidence type="ECO:0000255" key="1">
    <source>
        <dbReference type="HAMAP-Rule" id="MF_00335"/>
    </source>
</evidence>
<evidence type="ECO:0000255" key="2">
    <source>
        <dbReference type="PROSITE-ProRule" id="PRU01175"/>
    </source>
</evidence>
<reference key="1">
    <citation type="journal article" date="2004" name="Proc. Natl. Acad. Sci. U.S.A.">
        <title>The genome sequence of the probiotic intestinal bacterium Lactobacillus johnsonii NCC 533.</title>
        <authorList>
            <person name="Pridmore R.D."/>
            <person name="Berger B."/>
            <person name="Desiere F."/>
            <person name="Vilanova D."/>
            <person name="Barretto C."/>
            <person name="Pittet A.-C."/>
            <person name="Zwahlen M.-C."/>
            <person name="Rouvet M."/>
            <person name="Altermann E."/>
            <person name="Barrangou R."/>
            <person name="Mollet B."/>
            <person name="Mercenier A."/>
            <person name="Klaenhammer T."/>
            <person name="Arigoni F."/>
            <person name="Schell M.A."/>
        </authorList>
    </citation>
    <scope>NUCLEOTIDE SEQUENCE [LARGE SCALE GENOMIC DNA]</scope>
    <source>
        <strain>CNCM I-1225 / La1 / NCC 533</strain>
    </source>
</reference>